<keyword id="KW-0324">Glycolysis</keyword>
<keyword id="KW-0413">Isomerase</keyword>
<gene>
    <name evidence="1" type="primary">gpmB</name>
    <name type="ordered locus">YPK_3610</name>
</gene>
<feature type="chain" id="PRO_1000136022" description="Probable phosphoglycerate mutase GpmB">
    <location>
        <begin position="1"/>
        <end position="215"/>
    </location>
</feature>
<feature type="active site" description="Tele-phosphohistidine intermediate" evidence="1">
    <location>
        <position position="9"/>
    </location>
</feature>
<feature type="active site" description="Proton donor/acceptor" evidence="1">
    <location>
        <position position="82"/>
    </location>
</feature>
<feature type="binding site" evidence="1">
    <location>
        <begin position="8"/>
        <end position="15"/>
    </location>
    <ligand>
        <name>substrate</name>
    </ligand>
</feature>
<feature type="binding site" evidence="1">
    <location>
        <begin position="21"/>
        <end position="22"/>
    </location>
    <ligand>
        <name>substrate</name>
    </ligand>
</feature>
<feature type="binding site" evidence="1">
    <location>
        <position position="58"/>
    </location>
    <ligand>
        <name>substrate</name>
    </ligand>
</feature>
<feature type="binding site" evidence="1">
    <location>
        <begin position="82"/>
        <end position="85"/>
    </location>
    <ligand>
        <name>substrate</name>
    </ligand>
</feature>
<feature type="binding site" evidence="1">
    <location>
        <begin position="151"/>
        <end position="152"/>
    </location>
    <ligand>
        <name>substrate</name>
    </ligand>
</feature>
<feature type="site" description="Transition state stabilizer" evidence="1">
    <location>
        <position position="150"/>
    </location>
</feature>
<proteinExistence type="inferred from homology"/>
<protein>
    <recommendedName>
        <fullName evidence="1">Probable phosphoglycerate mutase GpmB</fullName>
        <ecNumber evidence="1">5.4.2.-</ecNumber>
    </recommendedName>
    <alternativeName>
        <fullName evidence="1">PGAM</fullName>
    </alternativeName>
    <alternativeName>
        <fullName evidence="1">Phosphoglyceromutase</fullName>
    </alternativeName>
</protein>
<comment type="catalytic activity">
    <reaction evidence="1">
        <text>(2R)-2-phosphoglycerate = (2R)-3-phosphoglycerate</text>
        <dbReference type="Rhea" id="RHEA:15901"/>
        <dbReference type="ChEBI" id="CHEBI:58272"/>
        <dbReference type="ChEBI" id="CHEBI:58289"/>
    </reaction>
</comment>
<comment type="pathway">
    <text evidence="1">Carbohydrate degradation; glycolysis; pyruvate from D-glyceraldehyde 3-phosphate: step 3/5.</text>
</comment>
<comment type="similarity">
    <text evidence="1">Belongs to the phosphoglycerate mutase family. GpmB subfamily.</text>
</comment>
<dbReference type="EC" id="5.4.2.-" evidence="1"/>
<dbReference type="EMBL" id="CP000950">
    <property type="protein sequence ID" value="ACA69877.1"/>
    <property type="molecule type" value="Genomic_DNA"/>
</dbReference>
<dbReference type="RefSeq" id="WP_002209230.1">
    <property type="nucleotide sequence ID" value="NZ_CP009792.1"/>
</dbReference>
<dbReference type="SMR" id="B1JL20"/>
<dbReference type="GeneID" id="57974154"/>
<dbReference type="KEGG" id="ypy:YPK_3610"/>
<dbReference type="PATRIC" id="fig|502800.11.peg.4362"/>
<dbReference type="UniPathway" id="UPA00109">
    <property type="reaction ID" value="UER00186"/>
</dbReference>
<dbReference type="GO" id="GO:0005737">
    <property type="term" value="C:cytoplasm"/>
    <property type="evidence" value="ECO:0007669"/>
    <property type="project" value="TreeGrafter"/>
</dbReference>
<dbReference type="GO" id="GO:0016791">
    <property type="term" value="F:phosphatase activity"/>
    <property type="evidence" value="ECO:0007669"/>
    <property type="project" value="TreeGrafter"/>
</dbReference>
<dbReference type="GO" id="GO:0004619">
    <property type="term" value="F:phosphoglycerate mutase activity"/>
    <property type="evidence" value="ECO:0007669"/>
    <property type="project" value="UniProtKB-UniRule"/>
</dbReference>
<dbReference type="GO" id="GO:0006096">
    <property type="term" value="P:glycolytic process"/>
    <property type="evidence" value="ECO:0007669"/>
    <property type="project" value="UniProtKB-UniRule"/>
</dbReference>
<dbReference type="CDD" id="cd07067">
    <property type="entry name" value="HP_PGM_like"/>
    <property type="match status" value="1"/>
</dbReference>
<dbReference type="Gene3D" id="3.40.50.1240">
    <property type="entry name" value="Phosphoglycerate mutase-like"/>
    <property type="match status" value="1"/>
</dbReference>
<dbReference type="HAMAP" id="MF_01040">
    <property type="entry name" value="PGAM_GpmB"/>
    <property type="match status" value="1"/>
</dbReference>
<dbReference type="InterPro" id="IPR013078">
    <property type="entry name" value="His_Pase_superF_clade-1"/>
</dbReference>
<dbReference type="InterPro" id="IPR029033">
    <property type="entry name" value="His_PPase_superfam"/>
</dbReference>
<dbReference type="InterPro" id="IPR001345">
    <property type="entry name" value="PG/BPGM_mutase_AS"/>
</dbReference>
<dbReference type="InterPro" id="IPR050275">
    <property type="entry name" value="PGM_Phosphatase"/>
</dbReference>
<dbReference type="InterPro" id="IPR023086">
    <property type="entry name" value="Phosphoglycerate_mutase_GpmB"/>
</dbReference>
<dbReference type="NCBIfam" id="NF002901">
    <property type="entry name" value="PRK03482.1"/>
    <property type="match status" value="1"/>
</dbReference>
<dbReference type="PANTHER" id="PTHR48100">
    <property type="entry name" value="BROAD-SPECIFICITY PHOSPHATASE YOR283W-RELATED"/>
    <property type="match status" value="1"/>
</dbReference>
<dbReference type="PANTHER" id="PTHR48100:SF1">
    <property type="entry name" value="HISTIDINE PHOSPHATASE FAMILY PROTEIN-RELATED"/>
    <property type="match status" value="1"/>
</dbReference>
<dbReference type="Pfam" id="PF00300">
    <property type="entry name" value="His_Phos_1"/>
    <property type="match status" value="1"/>
</dbReference>
<dbReference type="SMART" id="SM00855">
    <property type="entry name" value="PGAM"/>
    <property type="match status" value="1"/>
</dbReference>
<dbReference type="SUPFAM" id="SSF53254">
    <property type="entry name" value="Phosphoglycerate mutase-like"/>
    <property type="match status" value="1"/>
</dbReference>
<dbReference type="PROSITE" id="PS00175">
    <property type="entry name" value="PG_MUTASE"/>
    <property type="match status" value="1"/>
</dbReference>
<name>GPMB_YERPY</name>
<reference key="1">
    <citation type="submission" date="2008-02" db="EMBL/GenBank/DDBJ databases">
        <title>Complete sequence of Yersinia pseudotuberculosis YPIII.</title>
        <authorList>
            <consortium name="US DOE Joint Genome Institute"/>
            <person name="Copeland A."/>
            <person name="Lucas S."/>
            <person name="Lapidus A."/>
            <person name="Glavina del Rio T."/>
            <person name="Dalin E."/>
            <person name="Tice H."/>
            <person name="Bruce D."/>
            <person name="Goodwin L."/>
            <person name="Pitluck S."/>
            <person name="Munk A.C."/>
            <person name="Brettin T."/>
            <person name="Detter J.C."/>
            <person name="Han C."/>
            <person name="Tapia R."/>
            <person name="Schmutz J."/>
            <person name="Larimer F."/>
            <person name="Land M."/>
            <person name="Hauser L."/>
            <person name="Challacombe J.F."/>
            <person name="Green L."/>
            <person name="Lindler L.E."/>
            <person name="Nikolich M.P."/>
            <person name="Richardson P."/>
        </authorList>
    </citation>
    <scope>NUCLEOTIDE SEQUENCE [LARGE SCALE GENOMIC DNA]</scope>
    <source>
        <strain>YPIII</strain>
    </source>
</reference>
<organism>
    <name type="scientific">Yersinia pseudotuberculosis serotype O:3 (strain YPIII)</name>
    <dbReference type="NCBI Taxonomy" id="502800"/>
    <lineage>
        <taxon>Bacteria</taxon>
        <taxon>Pseudomonadati</taxon>
        <taxon>Pseudomonadota</taxon>
        <taxon>Gammaproteobacteria</taxon>
        <taxon>Enterobacterales</taxon>
        <taxon>Yersiniaceae</taxon>
        <taxon>Yersinia</taxon>
    </lineage>
</organism>
<sequence>MLQVYLVRHGETLWNAARRIQGQSDSPLTEIGIRQAHLVAQRVRNQGITHIISSDLGRTQQTAKIIADACGLTMVTDPRLRELNMGVLENRPIDSLTPEEEQWRKQMVNGTEGARIPEGESMTELGRRMHAALDSCLELPAGSKPLLVSHGMALGCLLSTLLGLPAHAERRLRLRNCSLSRVDYQESPWLASGWVIESAGDTAHLDMPALDELQR</sequence>
<evidence type="ECO:0000255" key="1">
    <source>
        <dbReference type="HAMAP-Rule" id="MF_01040"/>
    </source>
</evidence>
<accession>B1JL20</accession>